<reference key="1">
    <citation type="journal article" date="1988" name="Eur. J. Biochem.">
        <title>Complete nucleotide sequence of the ribosomal 'A' protein operon from the archaebacterium, Halobacterium halobium.</title>
        <authorList>
            <person name="Itoh T."/>
        </authorList>
    </citation>
    <scope>NUCLEOTIDE SEQUENCE [GENOMIC DNA]</scope>
    <source>
        <strain>R1 / S9</strain>
    </source>
</reference>
<reference key="2">
    <citation type="journal article" date="1989" name="EMBO J.">
        <title>Characterization of the L11, L1, L10 and L12 equivalent ribosomal protein gene cluster of the halophilic archaebacterium Halobacterium cutirubrum.</title>
        <authorList>
            <person name="Shimmin L.C."/>
            <person name="Dennis P.P."/>
        </authorList>
    </citation>
    <scope>NUCLEOTIDE SEQUENCE [GENOMIC DNA]</scope>
    <source>
        <strain>ATCC 33170 / DSM 669 / NCCB 81095 / NRC 34001</strain>
    </source>
</reference>
<reference key="3">
    <citation type="journal article" date="2000" name="Proc. Natl. Acad. Sci. U.S.A.">
        <title>Genome sequence of Halobacterium species NRC-1.</title>
        <authorList>
            <person name="Ng W.V."/>
            <person name="Kennedy S.P."/>
            <person name="Mahairas G.G."/>
            <person name="Berquist B."/>
            <person name="Pan M."/>
            <person name="Shukla H.D."/>
            <person name="Lasky S.R."/>
            <person name="Baliga N.S."/>
            <person name="Thorsson V."/>
            <person name="Sbrogna J."/>
            <person name="Swartzell S."/>
            <person name="Weir D."/>
            <person name="Hall J."/>
            <person name="Dahl T.A."/>
            <person name="Welti R."/>
            <person name="Goo Y.A."/>
            <person name="Leithauser B."/>
            <person name="Keller K."/>
            <person name="Cruz R."/>
            <person name="Danson M.J."/>
            <person name="Hough D.W."/>
            <person name="Maddocks D.G."/>
            <person name="Jablonski P.E."/>
            <person name="Krebs M.P."/>
            <person name="Angevine C.M."/>
            <person name="Dale H."/>
            <person name="Isenbarger T.A."/>
            <person name="Peck R.F."/>
            <person name="Pohlschroder M."/>
            <person name="Spudich J.L."/>
            <person name="Jung K.-H."/>
            <person name="Alam M."/>
            <person name="Freitas T."/>
            <person name="Hou S."/>
            <person name="Daniels C.J."/>
            <person name="Dennis P.P."/>
            <person name="Omer A.D."/>
            <person name="Ebhardt H."/>
            <person name="Lowe T.M."/>
            <person name="Liang P."/>
            <person name="Riley M."/>
            <person name="Hood L."/>
            <person name="DasSarma S."/>
        </authorList>
    </citation>
    <scope>NUCLEOTIDE SEQUENCE [LARGE SCALE GENOMIC DNA]</scope>
    <source>
        <strain>ATCC 700922 / JCM 11081 / NRC-1</strain>
    </source>
</reference>
<reference key="4">
    <citation type="journal article" date="1984" name="Can. J. Biochem. Cell Biol.">
        <title>Purification, properties, and N-terminal amino acid sequence of certain 50S ribosomal subunit proteins from the archaebacterium Halobacterium cutirubrum.</title>
        <authorList>
            <person name="Matheson A.T."/>
            <person name="Yaguchi M."/>
            <person name="Christensen P."/>
            <person name="Rollin C.F."/>
            <person name="Hasnain S."/>
        </authorList>
    </citation>
    <scope>PROTEIN SEQUENCE OF 2-37</scope>
</reference>
<protein>
    <recommendedName>
        <fullName evidence="1">Large ribosomal subunit protein uL1</fullName>
    </recommendedName>
    <alternativeName>
        <fullName evidence="3">50S ribosomal protein L1</fullName>
    </alternativeName>
    <alternativeName>
        <fullName>HL8</fullName>
    </alternativeName>
</protein>
<gene>
    <name evidence="1" type="primary">rpl1</name>
    <name type="ordered locus">VNG_1105G</name>
</gene>
<feature type="initiator methionine" description="Removed" evidence="2">
    <location>
        <position position="1"/>
    </location>
</feature>
<feature type="chain" id="PRO_0000125795" description="Large ribosomal subunit protein uL1">
    <location>
        <begin position="2"/>
        <end position="212"/>
    </location>
</feature>
<feature type="sequence conflict" description="In Ref. 4; AA sequence." evidence="3" ref="4">
    <original>E</original>
    <variation>G</variation>
    <location>
        <position position="15"/>
    </location>
</feature>
<feature type="sequence conflict" description="In Ref. 2; CAA33179." evidence="3" ref="2">
    <original>A</original>
    <variation>V</variation>
    <location>
        <position position="116"/>
    </location>
</feature>
<dbReference type="EMBL" id="X13008">
    <property type="protein sequence ID" value="CAA31430.1"/>
    <property type="molecule type" value="Genomic_DNA"/>
</dbReference>
<dbReference type="EMBL" id="X15078">
    <property type="protein sequence ID" value="CAA33179.1"/>
    <property type="molecule type" value="Genomic_DNA"/>
</dbReference>
<dbReference type="EMBL" id="AE004437">
    <property type="protein sequence ID" value="AAG19500.1"/>
    <property type="molecule type" value="Genomic_DNA"/>
</dbReference>
<dbReference type="PIR" id="H84266">
    <property type="entry name" value="H84266"/>
</dbReference>
<dbReference type="PIR" id="S01314">
    <property type="entry name" value="R5HSLH"/>
</dbReference>
<dbReference type="RefSeq" id="WP_010902795.1">
    <property type="nucleotide sequence ID" value="NC_002607.1"/>
</dbReference>
<dbReference type="SMR" id="P13575"/>
<dbReference type="FunCoup" id="P13575">
    <property type="interactions" value="126"/>
</dbReference>
<dbReference type="STRING" id="64091.VNG_1105G"/>
<dbReference type="PaxDb" id="64091-VNG_1105G"/>
<dbReference type="KEGG" id="hal:VNG_1105G"/>
<dbReference type="PATRIC" id="fig|64091.14.peg.846"/>
<dbReference type="HOGENOM" id="CLU_062853_4_0_2"/>
<dbReference type="InParanoid" id="P13575"/>
<dbReference type="OrthoDB" id="10382at2157"/>
<dbReference type="PhylomeDB" id="P13575"/>
<dbReference type="Proteomes" id="UP000000554">
    <property type="component" value="Chromosome"/>
</dbReference>
<dbReference type="GO" id="GO:0015934">
    <property type="term" value="C:large ribosomal subunit"/>
    <property type="evidence" value="ECO:0007669"/>
    <property type="project" value="InterPro"/>
</dbReference>
<dbReference type="GO" id="GO:0019843">
    <property type="term" value="F:rRNA binding"/>
    <property type="evidence" value="ECO:0007669"/>
    <property type="project" value="UniProtKB-UniRule"/>
</dbReference>
<dbReference type="GO" id="GO:0003735">
    <property type="term" value="F:structural constituent of ribosome"/>
    <property type="evidence" value="ECO:0007669"/>
    <property type="project" value="InterPro"/>
</dbReference>
<dbReference type="GO" id="GO:0000049">
    <property type="term" value="F:tRNA binding"/>
    <property type="evidence" value="ECO:0007669"/>
    <property type="project" value="UniProtKB-KW"/>
</dbReference>
<dbReference type="GO" id="GO:0006417">
    <property type="term" value="P:regulation of translation"/>
    <property type="evidence" value="ECO:0007669"/>
    <property type="project" value="UniProtKB-KW"/>
</dbReference>
<dbReference type="GO" id="GO:0006412">
    <property type="term" value="P:translation"/>
    <property type="evidence" value="ECO:0007669"/>
    <property type="project" value="UniProtKB-UniRule"/>
</dbReference>
<dbReference type="CDD" id="cd00403">
    <property type="entry name" value="Ribosomal_L1"/>
    <property type="match status" value="1"/>
</dbReference>
<dbReference type="FunFam" id="3.40.50.790:FF:000005">
    <property type="entry name" value="50S ribosomal protein L1"/>
    <property type="match status" value="1"/>
</dbReference>
<dbReference type="Gene3D" id="3.30.190.20">
    <property type="match status" value="1"/>
</dbReference>
<dbReference type="Gene3D" id="3.40.50.790">
    <property type="match status" value="1"/>
</dbReference>
<dbReference type="HAMAP" id="MF_01318_A">
    <property type="entry name" value="Ribosomal_uL1_A"/>
    <property type="match status" value="1"/>
</dbReference>
<dbReference type="InterPro" id="IPR002143">
    <property type="entry name" value="Ribosomal_uL1"/>
</dbReference>
<dbReference type="InterPro" id="IPR023674">
    <property type="entry name" value="Ribosomal_uL1-like"/>
</dbReference>
<dbReference type="InterPro" id="IPR028364">
    <property type="entry name" value="Ribosomal_uL1/biogenesis"/>
</dbReference>
<dbReference type="InterPro" id="IPR016095">
    <property type="entry name" value="Ribosomal_uL1_3-a/b-sand"/>
</dbReference>
<dbReference type="InterPro" id="IPR023669">
    <property type="entry name" value="Ribosomal_uL1_arc"/>
</dbReference>
<dbReference type="InterPro" id="IPR023673">
    <property type="entry name" value="Ribosomal_uL1_CS"/>
</dbReference>
<dbReference type="NCBIfam" id="NF003244">
    <property type="entry name" value="PRK04203.1"/>
    <property type="match status" value="1"/>
</dbReference>
<dbReference type="PANTHER" id="PTHR36427">
    <property type="entry name" value="54S RIBOSOMAL PROTEIN L1, MITOCHONDRIAL"/>
    <property type="match status" value="1"/>
</dbReference>
<dbReference type="PANTHER" id="PTHR36427:SF3">
    <property type="entry name" value="LARGE RIBOSOMAL SUBUNIT PROTEIN UL1M"/>
    <property type="match status" value="1"/>
</dbReference>
<dbReference type="Pfam" id="PF00687">
    <property type="entry name" value="Ribosomal_L1"/>
    <property type="match status" value="1"/>
</dbReference>
<dbReference type="PIRSF" id="PIRSF002155">
    <property type="entry name" value="Ribosomal_L1"/>
    <property type="match status" value="1"/>
</dbReference>
<dbReference type="SUPFAM" id="SSF56808">
    <property type="entry name" value="Ribosomal protein L1"/>
    <property type="match status" value="1"/>
</dbReference>
<dbReference type="PROSITE" id="PS01199">
    <property type="entry name" value="RIBOSOMAL_L1"/>
    <property type="match status" value="1"/>
</dbReference>
<name>RL1_HALSA</name>
<organism>
    <name type="scientific">Halobacterium salinarum (strain ATCC 700922 / JCM 11081 / NRC-1)</name>
    <name type="common">Halobacterium halobium</name>
    <dbReference type="NCBI Taxonomy" id="64091"/>
    <lineage>
        <taxon>Archaea</taxon>
        <taxon>Methanobacteriati</taxon>
        <taxon>Methanobacteriota</taxon>
        <taxon>Stenosarchaea group</taxon>
        <taxon>Halobacteria</taxon>
        <taxon>Halobacteriales</taxon>
        <taxon>Halobacteriaceae</taxon>
        <taxon>Halobacterium</taxon>
        <taxon>Halobacterium salinarum NRC-34001</taxon>
    </lineage>
</organism>
<proteinExistence type="evidence at protein level"/>
<accession>P13575</accession>
<accession>P05966</accession>
<accession>Q9HQL3</accession>
<comment type="function">
    <text evidence="1">Binds directly to 23S rRNA. Probably involved in E site tRNA release.</text>
</comment>
<comment type="function">
    <text evidence="1">Protein L1 is also a translational repressor protein, it controls the translation of its operon by binding to its mRNA.</text>
</comment>
<comment type="subunit">
    <text>Part of the 50S ribosomal subunit.</text>
</comment>
<comment type="similarity">
    <text evidence="1">Belongs to the universal ribosomal protein uL1 family.</text>
</comment>
<sequence>MADNDIEEAVARALEDAPQRNFRETVDLAVNLRDLDLNDPSQRVDEGVVLPSGTGQETQIVVFADGETAVRADDVADDVLDEDDLSDLADDTDAAKDLADETDFFVAEAPMMQDIAGALGQVLGPRGKMPTPLQPDDDVVDTVNRMKNTVQIRSRDRRTFHTRVGAEDMSAEDIASNIDVIMRRLHANLEKGPLNVDSVYVKTTMGPAVEVA</sequence>
<evidence type="ECO:0000255" key="1">
    <source>
        <dbReference type="HAMAP-Rule" id="MF_01318"/>
    </source>
</evidence>
<evidence type="ECO:0000269" key="2">
    <source>
    </source>
</evidence>
<evidence type="ECO:0000305" key="3"/>
<keyword id="KW-0903">Direct protein sequencing</keyword>
<keyword id="KW-1185">Reference proteome</keyword>
<keyword id="KW-0678">Repressor</keyword>
<keyword id="KW-0687">Ribonucleoprotein</keyword>
<keyword id="KW-0689">Ribosomal protein</keyword>
<keyword id="KW-0694">RNA-binding</keyword>
<keyword id="KW-0699">rRNA-binding</keyword>
<keyword id="KW-0810">Translation regulation</keyword>
<keyword id="KW-0820">tRNA-binding</keyword>